<sequence length="290" mass="32839">MLKTIQDKARHRTRPLWAWLKLLWQRIDEDNMTTLAGNLAYVSLLSLVPLVAVVFALFAAFPMFSDVSIQLRHFIFANFLPATGDVIQRYIEQFVANSNKMTAVGACGLIVTALLLMYSIDSALNTIWRSKRARPKIYSFAVYWMILTLGPLLAGASLAISSYLLSLRWASDLNTVIDNVLRIFPLLLSWISFWLLYSIVPTIRVPNRDAIVGAFVAALLFEAGKKGFALYITMFPSYQLIYGVLAVIPILFVWVYWTWCIVLLGAEITVTLGEYRKLKQAAEQEEDDEP</sequence>
<proteinExistence type="inferred from homology"/>
<name>YIHY_ECOL5</name>
<evidence type="ECO:0000255" key="1">
    <source>
        <dbReference type="HAMAP-Rule" id="MF_00672"/>
    </source>
</evidence>
<organism>
    <name type="scientific">Escherichia coli O6:K15:H31 (strain 536 / UPEC)</name>
    <dbReference type="NCBI Taxonomy" id="362663"/>
    <lineage>
        <taxon>Bacteria</taxon>
        <taxon>Pseudomonadati</taxon>
        <taxon>Pseudomonadota</taxon>
        <taxon>Gammaproteobacteria</taxon>
        <taxon>Enterobacterales</taxon>
        <taxon>Enterobacteriaceae</taxon>
        <taxon>Escherichia</taxon>
    </lineage>
</organism>
<dbReference type="EMBL" id="CP000247">
    <property type="protein sequence ID" value="ABG72053.1"/>
    <property type="molecule type" value="Genomic_DNA"/>
</dbReference>
<dbReference type="RefSeq" id="WP_000920762.1">
    <property type="nucleotide sequence ID" value="NC_008253.1"/>
</dbReference>
<dbReference type="KEGG" id="ecp:ECP_4095"/>
<dbReference type="HOGENOM" id="CLU_032288_0_0_6"/>
<dbReference type="Proteomes" id="UP000009182">
    <property type="component" value="Chromosome"/>
</dbReference>
<dbReference type="GO" id="GO:0005886">
    <property type="term" value="C:plasma membrane"/>
    <property type="evidence" value="ECO:0007669"/>
    <property type="project" value="UniProtKB-SubCell"/>
</dbReference>
<dbReference type="HAMAP" id="MF_00672">
    <property type="entry name" value="UPF0761"/>
    <property type="match status" value="1"/>
</dbReference>
<dbReference type="InterPro" id="IPR023679">
    <property type="entry name" value="UPF0761_bac"/>
</dbReference>
<dbReference type="InterPro" id="IPR017039">
    <property type="entry name" value="Virul_fac_BrkB"/>
</dbReference>
<dbReference type="NCBIfam" id="NF002457">
    <property type="entry name" value="PRK01637.1"/>
    <property type="match status" value="1"/>
</dbReference>
<dbReference type="NCBIfam" id="TIGR00765">
    <property type="entry name" value="yihY_not_rbn"/>
    <property type="match status" value="1"/>
</dbReference>
<dbReference type="PANTHER" id="PTHR30213">
    <property type="entry name" value="INNER MEMBRANE PROTEIN YHJD"/>
    <property type="match status" value="1"/>
</dbReference>
<dbReference type="PANTHER" id="PTHR30213:SF0">
    <property type="entry name" value="UPF0761 MEMBRANE PROTEIN YIHY"/>
    <property type="match status" value="1"/>
</dbReference>
<dbReference type="Pfam" id="PF03631">
    <property type="entry name" value="Virul_fac_BrkB"/>
    <property type="match status" value="1"/>
</dbReference>
<dbReference type="PIRSF" id="PIRSF035875">
    <property type="entry name" value="RNase_BN"/>
    <property type="match status" value="1"/>
</dbReference>
<accession>Q0TAH6</accession>
<protein>
    <recommendedName>
        <fullName evidence="1">UPF0761 membrane protein YihY</fullName>
    </recommendedName>
</protein>
<gene>
    <name evidence="1" type="primary">yihY</name>
    <name type="ordered locus">ECP_4095</name>
</gene>
<keyword id="KW-0997">Cell inner membrane</keyword>
<keyword id="KW-1003">Cell membrane</keyword>
<keyword id="KW-0472">Membrane</keyword>
<keyword id="KW-0812">Transmembrane</keyword>
<keyword id="KW-1133">Transmembrane helix</keyword>
<feature type="chain" id="PRO_1000044714" description="UPF0761 membrane protein YihY">
    <location>
        <begin position="1"/>
        <end position="290"/>
    </location>
</feature>
<feature type="transmembrane region" description="Helical" evidence="1">
    <location>
        <begin position="44"/>
        <end position="64"/>
    </location>
</feature>
<feature type="transmembrane region" description="Helical" evidence="1">
    <location>
        <begin position="104"/>
        <end position="124"/>
    </location>
</feature>
<feature type="transmembrane region" description="Helical" evidence="1">
    <location>
        <begin position="140"/>
        <end position="160"/>
    </location>
</feature>
<feature type="transmembrane region" description="Helical" evidence="1">
    <location>
        <begin position="183"/>
        <end position="203"/>
    </location>
</feature>
<feature type="transmembrane region" description="Helical" evidence="1">
    <location>
        <begin position="210"/>
        <end position="230"/>
    </location>
</feature>
<feature type="transmembrane region" description="Helical" evidence="1">
    <location>
        <begin position="244"/>
        <end position="264"/>
    </location>
</feature>
<reference key="1">
    <citation type="journal article" date="2006" name="Mol. Microbiol.">
        <title>Role of pathogenicity island-associated integrases in the genome plasticity of uropathogenic Escherichia coli strain 536.</title>
        <authorList>
            <person name="Hochhut B."/>
            <person name="Wilde C."/>
            <person name="Balling G."/>
            <person name="Middendorf B."/>
            <person name="Dobrindt U."/>
            <person name="Brzuszkiewicz E."/>
            <person name="Gottschalk G."/>
            <person name="Carniel E."/>
            <person name="Hacker J."/>
        </authorList>
    </citation>
    <scope>NUCLEOTIDE SEQUENCE [LARGE SCALE GENOMIC DNA]</scope>
    <source>
        <strain>536 / UPEC</strain>
    </source>
</reference>
<comment type="subcellular location">
    <subcellularLocation>
        <location evidence="1">Cell inner membrane</location>
        <topology evidence="1">Multi-pass membrane protein</topology>
    </subcellularLocation>
</comment>
<comment type="similarity">
    <text evidence="1">Belongs to the UPF0761 family.</text>
</comment>